<name>EIF3A_AEDAE</name>
<organism>
    <name type="scientific">Aedes aegypti</name>
    <name type="common">Yellowfever mosquito</name>
    <name type="synonym">Culex aegypti</name>
    <dbReference type="NCBI Taxonomy" id="7159"/>
    <lineage>
        <taxon>Eukaryota</taxon>
        <taxon>Metazoa</taxon>
        <taxon>Ecdysozoa</taxon>
        <taxon>Arthropoda</taxon>
        <taxon>Hexapoda</taxon>
        <taxon>Insecta</taxon>
        <taxon>Pterygota</taxon>
        <taxon>Neoptera</taxon>
        <taxon>Endopterygota</taxon>
        <taxon>Diptera</taxon>
        <taxon>Nematocera</taxon>
        <taxon>Culicoidea</taxon>
        <taxon>Culicidae</taxon>
        <taxon>Culicinae</taxon>
        <taxon>Aedini</taxon>
        <taxon>Aedes</taxon>
        <taxon>Stegomyia</taxon>
    </lineage>
</organism>
<reference key="1">
    <citation type="journal article" date="2007" name="Science">
        <title>Genome sequence of Aedes aegypti, a major arbovirus vector.</title>
        <authorList>
            <person name="Nene V."/>
            <person name="Wortman J.R."/>
            <person name="Lawson D."/>
            <person name="Haas B.J."/>
            <person name="Kodira C.D."/>
            <person name="Tu Z.J."/>
            <person name="Loftus B.J."/>
            <person name="Xi Z."/>
            <person name="Megy K."/>
            <person name="Grabherr M."/>
            <person name="Ren Q."/>
            <person name="Zdobnov E.M."/>
            <person name="Lobo N.F."/>
            <person name="Campbell K.S."/>
            <person name="Brown S.E."/>
            <person name="Bonaldo M.F."/>
            <person name="Zhu J."/>
            <person name="Sinkins S.P."/>
            <person name="Hogenkamp D.G."/>
            <person name="Amedeo P."/>
            <person name="Arensburger P."/>
            <person name="Atkinson P.W."/>
            <person name="Bidwell S.L."/>
            <person name="Biedler J."/>
            <person name="Birney E."/>
            <person name="Bruggner R.V."/>
            <person name="Costas J."/>
            <person name="Coy M.R."/>
            <person name="Crabtree J."/>
            <person name="Crawford M."/>
            <person name="DeBruyn B."/>
            <person name="DeCaprio D."/>
            <person name="Eiglmeier K."/>
            <person name="Eisenstadt E."/>
            <person name="El-Dorry H."/>
            <person name="Gelbart W.M."/>
            <person name="Gomes S.L."/>
            <person name="Hammond M."/>
            <person name="Hannick L.I."/>
            <person name="Hogan J.R."/>
            <person name="Holmes M.H."/>
            <person name="Jaffe D."/>
            <person name="Johnston S.J."/>
            <person name="Kennedy R.C."/>
            <person name="Koo H."/>
            <person name="Kravitz S."/>
            <person name="Kriventseva E.V."/>
            <person name="Kulp D."/>
            <person name="Labutti K."/>
            <person name="Lee E."/>
            <person name="Li S."/>
            <person name="Lovin D.D."/>
            <person name="Mao C."/>
            <person name="Mauceli E."/>
            <person name="Menck C.F."/>
            <person name="Miller J.R."/>
            <person name="Montgomery P."/>
            <person name="Mori A."/>
            <person name="Nascimento A.L."/>
            <person name="Naveira H.F."/>
            <person name="Nusbaum C."/>
            <person name="O'Leary S.B."/>
            <person name="Orvis J."/>
            <person name="Pertea M."/>
            <person name="Quesneville H."/>
            <person name="Reidenbach K.R."/>
            <person name="Rogers Y.-H.C."/>
            <person name="Roth C.W."/>
            <person name="Schneider J.R."/>
            <person name="Schatz M."/>
            <person name="Shumway M."/>
            <person name="Stanke M."/>
            <person name="Stinson E.O."/>
            <person name="Tubio J.M.C."/>
            <person name="Vanzee J.P."/>
            <person name="Verjovski-Almeida S."/>
            <person name="Werner D."/>
            <person name="White O.R."/>
            <person name="Wyder S."/>
            <person name="Zeng Q."/>
            <person name="Zhao Q."/>
            <person name="Zhao Y."/>
            <person name="Hill C.A."/>
            <person name="Raikhel A.S."/>
            <person name="Soares M.B."/>
            <person name="Knudson D.L."/>
            <person name="Lee N.H."/>
            <person name="Galagan J."/>
            <person name="Salzberg S.L."/>
            <person name="Paulsen I.T."/>
            <person name="Dimopoulos G."/>
            <person name="Collins F.H."/>
            <person name="Bruce B."/>
            <person name="Fraser-Liggett C.M."/>
            <person name="Severson D.W."/>
        </authorList>
    </citation>
    <scope>NUCLEOTIDE SEQUENCE [LARGE SCALE GENOMIC DNA]</scope>
    <source>
        <strain>LVPib12</strain>
    </source>
</reference>
<protein>
    <recommendedName>
        <fullName evidence="1">Eukaryotic translation initiation factor 3 subunit A</fullName>
        <shortName evidence="1">eIF3a</shortName>
    </recommendedName>
    <alternativeName>
        <fullName evidence="1">Eukaryotic translation initiation factor 3 subunit 10</fullName>
    </alternativeName>
</protein>
<sequence length="1133" mass="133297">MSRYMQRPENALKRANEFIEVGKPARALDTLQEVFRIKKWTYTWSESVIEPIMFKYLDLCVELKKSHIAKEGLFQYRNMFQLVNVGSLENVIRGYLKMAEERTEAAQQQSSQAILDIDDLDNLATPESILMSAVCGEDAQDRSDRTILLPWVKFLWESYCQCLELLKVNSHCENLYHDIAKMAFGFCLKYNRKMEFRKLCEKLRKHLEDISKVSSQTANVSISKPETQQLNLDTRLNQLDCAIQMELWLEAYKAIEDIHGLMTLSKKTPMPKTMALYYQKLAMVFWKAGNQLFHAAALLKLFQLSRDMKKNVTQEEIQRMTSHVLIATLAIPLPSAHPEFDRFIETDKSPLEKAQKLAVLLGLQQPPTRASLLKDVLRLNVLQLAAPQFQNLYKWLEVEFDPLNLCERVQNIIQEITVDENNPYAQYTQALQDVTLVRLVRQVSQVYQSIEFSRFLALAKFSTSFYLERILVDCVRHNDMQITIDHRNHCVHFGTDLSESQREDHPDGPTLQSMPSEQVRSQLVNMSVVLHRAIATINPNRNKAERDRLRAQMVKSYEENMVKEHQRILQRQKKIEDRKEYIERVNLEREEKELRELEEVARQHKLAEQRRLEQENEERERKRYENEVQMIKERNMKEKIDQIKQTAAGQKILKKFDEEDIKKMNAEEIAAKEAEERQKERKAHDNNLKSQEKKIDYFERAKRLEEIPLIEKYLEDKLVQDKQFWEKQEASRIEAAIAERKNAEAVQERLKRMQPDREIFWQKLKGERSNQFAEKLKAFNVALEEERKRRLTERVYERREERRQKWLREKEEERRRAEEEIRKQRQEEERIERERRAEERRIEDEKARLLEEKRRAREEEATKKAEENRQMQAKAREREREREADSWRDRRGGDAPAAAAQPNPAAQEATKPESGWRTAGAREPRGEDAPKKDGVYQPRFRDVRGGGAGGAGGVERRADDQESNKWRHGGDDGGKDDRDGPRRMGGDRPPMRRGGDDRDDRGPIRRGGDDRDDRGPIRRGDRPPMRDGERGVGMRREGGDRERRDGGDRRDFGGNRDRRDDRGGPRRDDRGDRGGDRDSAWRRPAPRGGDDGGNWRTRQDQAKPKDDRREERPKEARNTGPDEDGWTDVKHHR</sequence>
<comment type="function">
    <text evidence="1">RNA-binding component of the eukaryotic translation initiation factor 3 (eIF-3) complex, which is involved in protein synthesis of a specialized repertoire of mRNAs and, together with other initiation factors, stimulates binding of mRNA and methionyl-tRNAi to the 40S ribosome. The eIF-3 complex specifically targets and initiates translation of a subset of mRNAs involved in cell proliferation.</text>
</comment>
<comment type="subunit">
    <text evidence="1">Component of the eukaryotic translation initiation factor 3 (eIF-3) complex.</text>
</comment>
<comment type="subcellular location">
    <subcellularLocation>
        <location evidence="1">Cytoplasm</location>
    </subcellularLocation>
</comment>
<comment type="similarity">
    <text evidence="1">Belongs to the eIF-3 subunit A family.</text>
</comment>
<accession>Q173M7</accession>
<dbReference type="EMBL" id="CH477419">
    <property type="protein sequence ID" value="EAT41266.1"/>
    <property type="molecule type" value="Genomic_DNA"/>
</dbReference>
<dbReference type="SMR" id="Q173M7"/>
<dbReference type="FunCoup" id="Q173M7">
    <property type="interactions" value="2421"/>
</dbReference>
<dbReference type="STRING" id="7159.Q173M7"/>
<dbReference type="PaxDb" id="7159-AAEL007078-PA"/>
<dbReference type="EnsemblMetazoa" id="AAEL007078-RA">
    <property type="protein sequence ID" value="AAEL007078-PA"/>
    <property type="gene ID" value="AAEL007078"/>
</dbReference>
<dbReference type="GeneID" id="5568726"/>
<dbReference type="KEGG" id="aag:5568726"/>
<dbReference type="VEuPathDB" id="VectorBase:AAEL007078"/>
<dbReference type="eggNOG" id="KOG2072">
    <property type="taxonomic scope" value="Eukaryota"/>
</dbReference>
<dbReference type="HOGENOM" id="CLU_002096_1_1_1"/>
<dbReference type="InParanoid" id="Q173M7"/>
<dbReference type="OMA" id="EHITNKR"/>
<dbReference type="OrthoDB" id="18884at2759"/>
<dbReference type="PhylomeDB" id="Q173M7"/>
<dbReference type="Proteomes" id="UP000008820">
    <property type="component" value="Chromosome 1"/>
</dbReference>
<dbReference type="Proteomes" id="UP000682892">
    <property type="component" value="Chromosome 1"/>
</dbReference>
<dbReference type="GO" id="GO:0016282">
    <property type="term" value="C:eukaryotic 43S preinitiation complex"/>
    <property type="evidence" value="ECO:0007669"/>
    <property type="project" value="UniProtKB-UniRule"/>
</dbReference>
<dbReference type="GO" id="GO:0033290">
    <property type="term" value="C:eukaryotic 48S preinitiation complex"/>
    <property type="evidence" value="ECO:0007669"/>
    <property type="project" value="UniProtKB-UniRule"/>
</dbReference>
<dbReference type="GO" id="GO:0071540">
    <property type="term" value="C:eukaryotic translation initiation factor 3 complex, eIF3e"/>
    <property type="evidence" value="ECO:0007669"/>
    <property type="project" value="TreeGrafter"/>
</dbReference>
<dbReference type="GO" id="GO:0071541">
    <property type="term" value="C:eukaryotic translation initiation factor 3 complex, eIF3m"/>
    <property type="evidence" value="ECO:0007669"/>
    <property type="project" value="TreeGrafter"/>
</dbReference>
<dbReference type="GO" id="GO:0043614">
    <property type="term" value="C:multi-eIF complex"/>
    <property type="evidence" value="ECO:0007669"/>
    <property type="project" value="TreeGrafter"/>
</dbReference>
<dbReference type="GO" id="GO:0003729">
    <property type="term" value="F:mRNA binding"/>
    <property type="evidence" value="ECO:0007669"/>
    <property type="project" value="TreeGrafter"/>
</dbReference>
<dbReference type="GO" id="GO:0003743">
    <property type="term" value="F:translation initiation factor activity"/>
    <property type="evidence" value="ECO:0007669"/>
    <property type="project" value="UniProtKB-UniRule"/>
</dbReference>
<dbReference type="GO" id="GO:0001732">
    <property type="term" value="P:formation of cytoplasmic translation initiation complex"/>
    <property type="evidence" value="ECO:0007669"/>
    <property type="project" value="UniProtKB-UniRule"/>
</dbReference>
<dbReference type="GO" id="GO:0002188">
    <property type="term" value="P:translation reinitiation"/>
    <property type="evidence" value="ECO:0007669"/>
    <property type="project" value="TreeGrafter"/>
</dbReference>
<dbReference type="FunFam" id="1.25.40.860:FF:000007">
    <property type="entry name" value="Eukaryotic translation initiation factor 3 subunit A"/>
    <property type="match status" value="1"/>
</dbReference>
<dbReference type="FunFam" id="4.10.860.10:FF:000001">
    <property type="entry name" value="Eukaryotic translation initiation factor 3 subunit A"/>
    <property type="match status" value="1"/>
</dbReference>
<dbReference type="Gene3D" id="1.25.40.860">
    <property type="match status" value="2"/>
</dbReference>
<dbReference type="Gene3D" id="4.10.860.10">
    <property type="entry name" value="UVR domain"/>
    <property type="match status" value="1"/>
</dbReference>
<dbReference type="HAMAP" id="MF_03000">
    <property type="entry name" value="eIF3a"/>
    <property type="match status" value="1"/>
</dbReference>
<dbReference type="InterPro" id="IPR027512">
    <property type="entry name" value="EIF3A"/>
</dbReference>
<dbReference type="InterPro" id="IPR054711">
    <property type="entry name" value="eIF3a_PCI_TPR-like"/>
</dbReference>
<dbReference type="InterPro" id="IPR000717">
    <property type="entry name" value="PCI_dom"/>
</dbReference>
<dbReference type="PANTHER" id="PTHR14005:SF0">
    <property type="entry name" value="EUKARYOTIC TRANSLATION INITIATION FACTOR 3 SUBUNIT A"/>
    <property type="match status" value="1"/>
</dbReference>
<dbReference type="PANTHER" id="PTHR14005">
    <property type="entry name" value="EUKARYOTIC TRANSLATION INITIATION FACTOR 3, THETA SUBUNIT"/>
    <property type="match status" value="1"/>
</dbReference>
<dbReference type="Pfam" id="PF22591">
    <property type="entry name" value="eIF3a_PCI_TPR-like"/>
    <property type="match status" value="1"/>
</dbReference>
<dbReference type="Pfam" id="PF01399">
    <property type="entry name" value="PCI"/>
    <property type="match status" value="1"/>
</dbReference>
<dbReference type="SMART" id="SM00088">
    <property type="entry name" value="PINT"/>
    <property type="match status" value="1"/>
</dbReference>
<dbReference type="PROSITE" id="PS50250">
    <property type="entry name" value="PCI"/>
    <property type="match status" value="1"/>
</dbReference>
<proteinExistence type="inferred from homology"/>
<keyword id="KW-0175">Coiled coil</keyword>
<keyword id="KW-0963">Cytoplasm</keyword>
<keyword id="KW-0396">Initiation factor</keyword>
<keyword id="KW-0648">Protein biosynthesis</keyword>
<keyword id="KW-1185">Reference proteome</keyword>
<keyword id="KW-0694">RNA-binding</keyword>
<evidence type="ECO:0000255" key="1">
    <source>
        <dbReference type="HAMAP-Rule" id="MF_03000"/>
    </source>
</evidence>
<evidence type="ECO:0000255" key="2">
    <source>
        <dbReference type="PROSITE-ProRule" id="PRU01185"/>
    </source>
</evidence>
<evidence type="ECO:0000256" key="3">
    <source>
        <dbReference type="SAM" id="MobiDB-lite"/>
    </source>
</evidence>
<feature type="chain" id="PRO_0000366331" description="Eukaryotic translation initiation factor 3 subunit A">
    <location>
        <begin position="1"/>
        <end position="1133"/>
    </location>
</feature>
<feature type="domain" description="PCI" evidence="2">
    <location>
        <begin position="317"/>
        <end position="498"/>
    </location>
</feature>
<feature type="region of interest" description="Disordered" evidence="3">
    <location>
        <begin position="810"/>
        <end position="1133"/>
    </location>
</feature>
<feature type="coiled-coil region" evidence="1">
    <location>
        <begin position="573"/>
        <end position="700"/>
    </location>
</feature>
<feature type="coiled-coil region" evidence="1">
    <location>
        <begin position="784"/>
        <end position="886"/>
    </location>
</feature>
<feature type="compositionally biased region" description="Basic and acidic residues" evidence="3">
    <location>
        <begin position="810"/>
        <end position="893"/>
    </location>
</feature>
<feature type="compositionally biased region" description="Low complexity" evidence="3">
    <location>
        <begin position="895"/>
        <end position="909"/>
    </location>
</feature>
<feature type="compositionally biased region" description="Basic and acidic residues" evidence="3">
    <location>
        <begin position="920"/>
        <end position="944"/>
    </location>
</feature>
<feature type="compositionally biased region" description="Basic and acidic residues" evidence="3">
    <location>
        <begin position="954"/>
        <end position="1081"/>
    </location>
</feature>
<feature type="compositionally biased region" description="Basic and acidic residues" evidence="3">
    <location>
        <begin position="1097"/>
        <end position="1117"/>
    </location>
</feature>
<gene>
    <name evidence="1" type="primary">eIF3-S10</name>
    <name type="ORF">AAEL007078</name>
</gene>